<feature type="chain" id="PRO_0000150206" description="Phosphoserine aminotransferase">
    <location>
        <begin position="1"/>
        <end position="362"/>
    </location>
</feature>
<feature type="binding site" evidence="1">
    <location>
        <position position="9"/>
    </location>
    <ligand>
        <name>L-glutamate</name>
        <dbReference type="ChEBI" id="CHEBI:29985"/>
    </ligand>
</feature>
<feature type="binding site" evidence="1">
    <location>
        <position position="42"/>
    </location>
    <ligand>
        <name>L-glutamate</name>
        <dbReference type="ChEBI" id="CHEBI:29985"/>
    </ligand>
</feature>
<feature type="binding site" evidence="1">
    <location>
        <begin position="76"/>
        <end position="77"/>
    </location>
    <ligand>
        <name>pyridoxal 5'-phosphate</name>
        <dbReference type="ChEBI" id="CHEBI:597326"/>
    </ligand>
</feature>
<feature type="binding site" evidence="1">
    <location>
        <position position="102"/>
    </location>
    <ligand>
        <name>pyridoxal 5'-phosphate</name>
        <dbReference type="ChEBI" id="CHEBI:597326"/>
    </ligand>
</feature>
<feature type="binding site" evidence="1">
    <location>
        <position position="153"/>
    </location>
    <ligand>
        <name>pyridoxal 5'-phosphate</name>
        <dbReference type="ChEBI" id="CHEBI:597326"/>
    </ligand>
</feature>
<feature type="binding site" evidence="1">
    <location>
        <position position="174"/>
    </location>
    <ligand>
        <name>pyridoxal 5'-phosphate</name>
        <dbReference type="ChEBI" id="CHEBI:597326"/>
    </ligand>
</feature>
<feature type="binding site" evidence="1">
    <location>
        <position position="197"/>
    </location>
    <ligand>
        <name>pyridoxal 5'-phosphate</name>
        <dbReference type="ChEBI" id="CHEBI:597326"/>
    </ligand>
</feature>
<feature type="binding site" evidence="1">
    <location>
        <begin position="239"/>
        <end position="240"/>
    </location>
    <ligand>
        <name>pyridoxal 5'-phosphate</name>
        <dbReference type="ChEBI" id="CHEBI:597326"/>
    </ligand>
</feature>
<feature type="modified residue" description="N6-(pyridoxal phosphate)lysine" evidence="1">
    <location>
        <position position="198"/>
    </location>
</feature>
<name>SERC_SALTI</name>
<keyword id="KW-0028">Amino-acid biosynthesis</keyword>
<keyword id="KW-0032">Aminotransferase</keyword>
<keyword id="KW-0963">Cytoplasm</keyword>
<keyword id="KW-0663">Pyridoxal phosphate</keyword>
<keyword id="KW-0664">Pyridoxine biosynthesis</keyword>
<keyword id="KW-0718">Serine biosynthesis</keyword>
<keyword id="KW-0808">Transferase</keyword>
<reference key="1">
    <citation type="journal article" date="2001" name="Nature">
        <title>Complete genome sequence of a multiple drug resistant Salmonella enterica serovar Typhi CT18.</title>
        <authorList>
            <person name="Parkhill J."/>
            <person name="Dougan G."/>
            <person name="James K.D."/>
            <person name="Thomson N.R."/>
            <person name="Pickard D."/>
            <person name="Wain J."/>
            <person name="Churcher C.M."/>
            <person name="Mungall K.L."/>
            <person name="Bentley S.D."/>
            <person name="Holden M.T.G."/>
            <person name="Sebaihia M."/>
            <person name="Baker S."/>
            <person name="Basham D."/>
            <person name="Brooks K."/>
            <person name="Chillingworth T."/>
            <person name="Connerton P."/>
            <person name="Cronin A."/>
            <person name="Davis P."/>
            <person name="Davies R.M."/>
            <person name="Dowd L."/>
            <person name="White N."/>
            <person name="Farrar J."/>
            <person name="Feltwell T."/>
            <person name="Hamlin N."/>
            <person name="Haque A."/>
            <person name="Hien T.T."/>
            <person name="Holroyd S."/>
            <person name="Jagels K."/>
            <person name="Krogh A."/>
            <person name="Larsen T.S."/>
            <person name="Leather S."/>
            <person name="Moule S."/>
            <person name="O'Gaora P."/>
            <person name="Parry C."/>
            <person name="Quail M.A."/>
            <person name="Rutherford K.M."/>
            <person name="Simmonds M."/>
            <person name="Skelton J."/>
            <person name="Stevens K."/>
            <person name="Whitehead S."/>
            <person name="Barrell B.G."/>
        </authorList>
    </citation>
    <scope>NUCLEOTIDE SEQUENCE [LARGE SCALE GENOMIC DNA]</scope>
    <source>
        <strain>CT18</strain>
    </source>
</reference>
<reference key="2">
    <citation type="journal article" date="2003" name="J. Bacteriol.">
        <title>Comparative genomics of Salmonella enterica serovar Typhi strains Ty2 and CT18.</title>
        <authorList>
            <person name="Deng W."/>
            <person name="Liou S.-R."/>
            <person name="Plunkett G. III"/>
            <person name="Mayhew G.F."/>
            <person name="Rose D.J."/>
            <person name="Burland V."/>
            <person name="Kodoyianni V."/>
            <person name="Schwartz D.C."/>
            <person name="Blattner F.R."/>
        </authorList>
    </citation>
    <scope>NUCLEOTIDE SEQUENCE [LARGE SCALE GENOMIC DNA]</scope>
    <source>
        <strain>ATCC 700931 / Ty2</strain>
    </source>
</reference>
<dbReference type="EC" id="2.6.1.52" evidence="1"/>
<dbReference type="EMBL" id="AL513382">
    <property type="protein sequence ID" value="CAD05377.1"/>
    <property type="molecule type" value="Genomic_DNA"/>
</dbReference>
<dbReference type="EMBL" id="AE014613">
    <property type="protein sequence ID" value="AAO69571.1"/>
    <property type="molecule type" value="Genomic_DNA"/>
</dbReference>
<dbReference type="PIR" id="AG0613">
    <property type="entry name" value="AG0613"/>
</dbReference>
<dbReference type="RefSeq" id="NP_455464.1">
    <property type="nucleotide sequence ID" value="NC_003198.1"/>
</dbReference>
<dbReference type="RefSeq" id="WP_000079590.1">
    <property type="nucleotide sequence ID" value="NZ_WSUR01000013.1"/>
</dbReference>
<dbReference type="SMR" id="P62677"/>
<dbReference type="STRING" id="220341.gene:17584968"/>
<dbReference type="KEGG" id="stt:t1957"/>
<dbReference type="KEGG" id="sty:STY0977"/>
<dbReference type="PATRIC" id="fig|220341.7.peg.986"/>
<dbReference type="eggNOG" id="COG1932">
    <property type="taxonomic scope" value="Bacteria"/>
</dbReference>
<dbReference type="HOGENOM" id="CLU_034866_0_2_6"/>
<dbReference type="OMA" id="AFVYFCD"/>
<dbReference type="OrthoDB" id="9809412at2"/>
<dbReference type="UniPathway" id="UPA00135">
    <property type="reaction ID" value="UER00197"/>
</dbReference>
<dbReference type="UniPathway" id="UPA00244">
    <property type="reaction ID" value="UER00311"/>
</dbReference>
<dbReference type="Proteomes" id="UP000000541">
    <property type="component" value="Chromosome"/>
</dbReference>
<dbReference type="Proteomes" id="UP000002670">
    <property type="component" value="Chromosome"/>
</dbReference>
<dbReference type="GO" id="GO:0005737">
    <property type="term" value="C:cytoplasm"/>
    <property type="evidence" value="ECO:0007669"/>
    <property type="project" value="UniProtKB-SubCell"/>
</dbReference>
<dbReference type="GO" id="GO:0004648">
    <property type="term" value="F:O-phospho-L-serine:2-oxoglutarate aminotransferase activity"/>
    <property type="evidence" value="ECO:0007669"/>
    <property type="project" value="UniProtKB-UniRule"/>
</dbReference>
<dbReference type="GO" id="GO:0030170">
    <property type="term" value="F:pyridoxal phosphate binding"/>
    <property type="evidence" value="ECO:0007669"/>
    <property type="project" value="UniProtKB-UniRule"/>
</dbReference>
<dbReference type="GO" id="GO:0006564">
    <property type="term" value="P:L-serine biosynthetic process"/>
    <property type="evidence" value="ECO:0007669"/>
    <property type="project" value="UniProtKB-UniRule"/>
</dbReference>
<dbReference type="GO" id="GO:0008615">
    <property type="term" value="P:pyridoxine biosynthetic process"/>
    <property type="evidence" value="ECO:0007669"/>
    <property type="project" value="UniProtKB-UniRule"/>
</dbReference>
<dbReference type="CDD" id="cd00611">
    <property type="entry name" value="PSAT_like"/>
    <property type="match status" value="1"/>
</dbReference>
<dbReference type="FunFam" id="3.40.640.10:FF:000010">
    <property type="entry name" value="Phosphoserine aminotransferase"/>
    <property type="match status" value="1"/>
</dbReference>
<dbReference type="FunFam" id="3.90.1150.10:FF:000006">
    <property type="entry name" value="Phosphoserine aminotransferase"/>
    <property type="match status" value="1"/>
</dbReference>
<dbReference type="Gene3D" id="3.90.1150.10">
    <property type="entry name" value="Aspartate Aminotransferase, domain 1"/>
    <property type="match status" value="1"/>
</dbReference>
<dbReference type="Gene3D" id="3.40.640.10">
    <property type="entry name" value="Type I PLP-dependent aspartate aminotransferase-like (Major domain)"/>
    <property type="match status" value="1"/>
</dbReference>
<dbReference type="HAMAP" id="MF_00160">
    <property type="entry name" value="SerC_aminotrans_5"/>
    <property type="match status" value="1"/>
</dbReference>
<dbReference type="InterPro" id="IPR000192">
    <property type="entry name" value="Aminotrans_V_dom"/>
</dbReference>
<dbReference type="InterPro" id="IPR020578">
    <property type="entry name" value="Aminotrans_V_PyrdxlP_BS"/>
</dbReference>
<dbReference type="InterPro" id="IPR022278">
    <property type="entry name" value="Pser_aminoTfrase"/>
</dbReference>
<dbReference type="InterPro" id="IPR015424">
    <property type="entry name" value="PyrdxlP-dep_Trfase"/>
</dbReference>
<dbReference type="InterPro" id="IPR015421">
    <property type="entry name" value="PyrdxlP-dep_Trfase_major"/>
</dbReference>
<dbReference type="InterPro" id="IPR015422">
    <property type="entry name" value="PyrdxlP-dep_Trfase_small"/>
</dbReference>
<dbReference type="NCBIfam" id="NF003764">
    <property type="entry name" value="PRK05355.1"/>
    <property type="match status" value="1"/>
</dbReference>
<dbReference type="NCBIfam" id="TIGR01364">
    <property type="entry name" value="serC_1"/>
    <property type="match status" value="1"/>
</dbReference>
<dbReference type="PANTHER" id="PTHR43247">
    <property type="entry name" value="PHOSPHOSERINE AMINOTRANSFERASE"/>
    <property type="match status" value="1"/>
</dbReference>
<dbReference type="PANTHER" id="PTHR43247:SF1">
    <property type="entry name" value="PHOSPHOSERINE AMINOTRANSFERASE"/>
    <property type="match status" value="1"/>
</dbReference>
<dbReference type="Pfam" id="PF00266">
    <property type="entry name" value="Aminotran_5"/>
    <property type="match status" value="1"/>
</dbReference>
<dbReference type="PIRSF" id="PIRSF000525">
    <property type="entry name" value="SerC"/>
    <property type="match status" value="1"/>
</dbReference>
<dbReference type="SUPFAM" id="SSF53383">
    <property type="entry name" value="PLP-dependent transferases"/>
    <property type="match status" value="1"/>
</dbReference>
<dbReference type="PROSITE" id="PS00595">
    <property type="entry name" value="AA_TRANSFER_CLASS_5"/>
    <property type="match status" value="1"/>
</dbReference>
<comment type="function">
    <text evidence="1">Catalyzes the reversible conversion of 3-phosphohydroxypyruvate to phosphoserine and of 3-hydroxy-2-oxo-4-phosphonooxybutanoate to phosphohydroxythreonine.</text>
</comment>
<comment type="catalytic activity">
    <reaction evidence="1">
        <text>O-phospho-L-serine + 2-oxoglutarate = 3-phosphooxypyruvate + L-glutamate</text>
        <dbReference type="Rhea" id="RHEA:14329"/>
        <dbReference type="ChEBI" id="CHEBI:16810"/>
        <dbReference type="ChEBI" id="CHEBI:18110"/>
        <dbReference type="ChEBI" id="CHEBI:29985"/>
        <dbReference type="ChEBI" id="CHEBI:57524"/>
        <dbReference type="EC" id="2.6.1.52"/>
    </reaction>
</comment>
<comment type="catalytic activity">
    <reaction evidence="1">
        <text>4-(phosphooxy)-L-threonine + 2-oxoglutarate = (R)-3-hydroxy-2-oxo-4-phosphooxybutanoate + L-glutamate</text>
        <dbReference type="Rhea" id="RHEA:16573"/>
        <dbReference type="ChEBI" id="CHEBI:16810"/>
        <dbReference type="ChEBI" id="CHEBI:29985"/>
        <dbReference type="ChEBI" id="CHEBI:58452"/>
        <dbReference type="ChEBI" id="CHEBI:58538"/>
        <dbReference type="EC" id="2.6.1.52"/>
    </reaction>
</comment>
<comment type="cofactor">
    <cofactor evidence="1">
        <name>pyridoxal 5'-phosphate</name>
        <dbReference type="ChEBI" id="CHEBI:597326"/>
    </cofactor>
    <text evidence="1">Binds 1 pyridoxal phosphate per subunit.</text>
</comment>
<comment type="pathway">
    <text evidence="1">Amino-acid biosynthesis; L-serine biosynthesis; L-serine from 3-phospho-D-glycerate: step 2/3.</text>
</comment>
<comment type="pathway">
    <text evidence="1">Cofactor biosynthesis; pyridoxine 5'-phosphate biosynthesis; pyridoxine 5'-phosphate from D-erythrose 4-phosphate: step 3/5.</text>
</comment>
<comment type="subunit">
    <text evidence="1">Homodimer.</text>
</comment>
<comment type="subcellular location">
    <subcellularLocation>
        <location evidence="1">Cytoplasm</location>
    </subcellularLocation>
</comment>
<comment type="similarity">
    <text evidence="1">Belongs to the class-V pyridoxal-phosphate-dependent aminotransferase family. SerC subfamily.</text>
</comment>
<accession>P62677</accession>
<accession>P17902</accession>
<proteinExistence type="inferred from homology"/>
<protein>
    <recommendedName>
        <fullName evidence="1">Phosphoserine aminotransferase</fullName>
        <ecNumber evidence="1">2.6.1.52</ecNumber>
    </recommendedName>
    <alternativeName>
        <fullName evidence="1">Phosphohydroxythreonine aminotransferase</fullName>
        <shortName evidence="1">PSAT</shortName>
    </alternativeName>
</protein>
<gene>
    <name evidence="1" type="primary">serC</name>
    <name type="ordered locus">STY0977</name>
    <name type="ordered locus">t1957</name>
</gene>
<organism>
    <name type="scientific">Salmonella typhi</name>
    <dbReference type="NCBI Taxonomy" id="90370"/>
    <lineage>
        <taxon>Bacteria</taxon>
        <taxon>Pseudomonadati</taxon>
        <taxon>Pseudomonadota</taxon>
        <taxon>Gammaproteobacteria</taxon>
        <taxon>Enterobacterales</taxon>
        <taxon>Enterobacteriaceae</taxon>
        <taxon>Salmonella</taxon>
    </lineage>
</organism>
<sequence>MAQVFNFSSGPAMLPAEVLKLAQQELRDWHGLGTSVMEISHRGKEFIQVAEEAEQDFRDLLNIPSNYKVLFCHGGGRGQFAGVPLNLLGDKTTADYVDAGYWAASAIKEAKKYCAPQIIDAKITVDGKRAVKPMREWQLSDNAAYLHYCPNETIDGIAIDETPDFGPEVVVTADFSSTILSAPLDVSRYGVIYAGAQKNIGPAGLTLVIVREDLLGKAHESCPSILDYTVLNDNDSMFNTPPTFAWYLSGLVFKWLKAQGGVAAMHKINQQKAELLYGVIDNSDFYRNDVAQANRSRMNVPFQLADNALDKVFLEESFAAGLHALKGHRVVGGMRASIYNAMPIEGVKALTDFMIDFERRHG</sequence>
<evidence type="ECO:0000255" key="1">
    <source>
        <dbReference type="HAMAP-Rule" id="MF_00160"/>
    </source>
</evidence>